<protein>
    <recommendedName>
        <fullName>T-complex protein 1 subunit alpha</fullName>
        <shortName>TCP-1-alpha</shortName>
    </recommendedName>
    <alternativeName>
        <fullName>CCT-alpha</fullName>
    </alternativeName>
</protein>
<dbReference type="EMBL" id="AL590443">
    <property type="protein sequence ID" value="CAD26168.1"/>
    <property type="molecule type" value="Genomic_DNA"/>
</dbReference>
<dbReference type="RefSeq" id="NP_597533.1">
    <property type="nucleotide sequence ID" value="NM_001040897.1"/>
</dbReference>
<dbReference type="SMR" id="Q8SSC9"/>
<dbReference type="FunCoup" id="Q8SSC9">
    <property type="interactions" value="341"/>
</dbReference>
<dbReference type="STRING" id="284813.Q8SSC9"/>
<dbReference type="GeneID" id="858695"/>
<dbReference type="KEGG" id="ecu:ECU03_0220"/>
<dbReference type="VEuPathDB" id="MicrosporidiaDB:ECU03_0220"/>
<dbReference type="HOGENOM" id="CLU_008891_5_1_1"/>
<dbReference type="InParanoid" id="Q8SSC9"/>
<dbReference type="OMA" id="RGPNDYQ"/>
<dbReference type="OrthoDB" id="10248520at2759"/>
<dbReference type="Proteomes" id="UP000000819">
    <property type="component" value="Chromosome III"/>
</dbReference>
<dbReference type="GO" id="GO:0005832">
    <property type="term" value="C:chaperonin-containing T-complex"/>
    <property type="evidence" value="ECO:0007669"/>
    <property type="project" value="UniProtKB-ARBA"/>
</dbReference>
<dbReference type="GO" id="GO:0005524">
    <property type="term" value="F:ATP binding"/>
    <property type="evidence" value="ECO:0007669"/>
    <property type="project" value="UniProtKB-KW"/>
</dbReference>
<dbReference type="GO" id="GO:0016887">
    <property type="term" value="F:ATP hydrolysis activity"/>
    <property type="evidence" value="ECO:0007669"/>
    <property type="project" value="InterPro"/>
</dbReference>
<dbReference type="GO" id="GO:0140662">
    <property type="term" value="F:ATP-dependent protein folding chaperone"/>
    <property type="evidence" value="ECO:0007669"/>
    <property type="project" value="InterPro"/>
</dbReference>
<dbReference type="GO" id="GO:0051082">
    <property type="term" value="F:unfolded protein binding"/>
    <property type="evidence" value="ECO:0007669"/>
    <property type="project" value="InterPro"/>
</dbReference>
<dbReference type="Gene3D" id="3.50.7.10">
    <property type="entry name" value="GroEL"/>
    <property type="match status" value="1"/>
</dbReference>
<dbReference type="Gene3D" id="1.10.560.10">
    <property type="entry name" value="GroEL-like equatorial domain"/>
    <property type="match status" value="1"/>
</dbReference>
<dbReference type="Gene3D" id="3.30.260.10">
    <property type="entry name" value="TCP-1-like chaperonin intermediate domain"/>
    <property type="match status" value="1"/>
</dbReference>
<dbReference type="InterPro" id="IPR012715">
    <property type="entry name" value="Chap_CCT_alpha"/>
</dbReference>
<dbReference type="InterPro" id="IPR017998">
    <property type="entry name" value="Chaperone_TCP-1"/>
</dbReference>
<dbReference type="InterPro" id="IPR002194">
    <property type="entry name" value="Chaperonin_TCP-1_CS"/>
</dbReference>
<dbReference type="InterPro" id="IPR002423">
    <property type="entry name" value="Cpn60/GroEL/TCP-1"/>
</dbReference>
<dbReference type="InterPro" id="IPR027409">
    <property type="entry name" value="GroEL-like_apical_dom_sf"/>
</dbReference>
<dbReference type="InterPro" id="IPR027413">
    <property type="entry name" value="GROEL-like_equatorial_sf"/>
</dbReference>
<dbReference type="InterPro" id="IPR027410">
    <property type="entry name" value="TCP-1-like_intermed_sf"/>
</dbReference>
<dbReference type="InterPro" id="IPR053374">
    <property type="entry name" value="TCP-1_chaperonin"/>
</dbReference>
<dbReference type="NCBIfam" id="TIGR02340">
    <property type="entry name" value="chap_CCT_alpha"/>
    <property type="match status" value="1"/>
</dbReference>
<dbReference type="NCBIfam" id="NF041083">
    <property type="entry name" value="thermosome_beta"/>
    <property type="match status" value="1"/>
</dbReference>
<dbReference type="PANTHER" id="PTHR11353">
    <property type="entry name" value="CHAPERONIN"/>
    <property type="match status" value="1"/>
</dbReference>
<dbReference type="Pfam" id="PF00118">
    <property type="entry name" value="Cpn60_TCP1"/>
    <property type="match status" value="1"/>
</dbReference>
<dbReference type="PRINTS" id="PR00304">
    <property type="entry name" value="TCOMPLEXTCP1"/>
</dbReference>
<dbReference type="SUPFAM" id="SSF52029">
    <property type="entry name" value="GroEL apical domain-like"/>
    <property type="match status" value="1"/>
</dbReference>
<dbReference type="SUPFAM" id="SSF48592">
    <property type="entry name" value="GroEL equatorial domain-like"/>
    <property type="match status" value="1"/>
</dbReference>
<dbReference type="SUPFAM" id="SSF54849">
    <property type="entry name" value="GroEL-intermediate domain like"/>
    <property type="match status" value="1"/>
</dbReference>
<dbReference type="PROSITE" id="PS00995">
    <property type="entry name" value="TCP1_3"/>
    <property type="match status" value="1"/>
</dbReference>
<evidence type="ECO:0000250" key="1"/>
<evidence type="ECO:0000269" key="2">
    <source>
    </source>
</evidence>
<evidence type="ECO:0000305" key="3"/>
<organism>
    <name type="scientific">Encephalitozoon cuniculi (strain GB-M1)</name>
    <name type="common">Microsporidian parasite</name>
    <dbReference type="NCBI Taxonomy" id="284813"/>
    <lineage>
        <taxon>Eukaryota</taxon>
        <taxon>Fungi</taxon>
        <taxon>Fungi incertae sedis</taxon>
        <taxon>Microsporidia</taxon>
        <taxon>Unikaryonidae</taxon>
        <taxon>Encephalitozoon</taxon>
    </lineage>
</organism>
<feature type="chain" id="PRO_0000378553" description="T-complex protein 1 subunit alpha">
    <location>
        <begin position="1"/>
        <end position="540"/>
    </location>
</feature>
<proteinExistence type="evidence at protein level"/>
<accession>Q8SSC9</accession>
<name>TCPA_ENCCU</name>
<reference key="1">
    <citation type="journal article" date="2001" name="Nature">
        <title>Genome sequence and gene compaction of the eukaryote parasite Encephalitozoon cuniculi.</title>
        <authorList>
            <person name="Katinka M.D."/>
            <person name="Duprat S."/>
            <person name="Cornillot E."/>
            <person name="Metenier G."/>
            <person name="Thomarat F."/>
            <person name="Prensier G."/>
            <person name="Barbe V."/>
            <person name="Peyretaillade E."/>
            <person name="Brottier P."/>
            <person name="Wincker P."/>
            <person name="Delbac F."/>
            <person name="El Alaoui H."/>
            <person name="Peyret P."/>
            <person name="Saurin W."/>
            <person name="Gouy M."/>
            <person name="Weissenbach J."/>
            <person name="Vivares C.P."/>
        </authorList>
    </citation>
    <scope>NUCLEOTIDE SEQUENCE [LARGE SCALE GENOMIC DNA]</scope>
    <source>
        <strain>GB-M1</strain>
    </source>
</reference>
<reference key="2">
    <citation type="journal article" date="2006" name="Proteomics">
        <title>Proteomic analysis of the eukaryotic parasite Encephalitozoon cuniculi (microsporidia): a reference map for proteins expressed in late sporogonial stages.</title>
        <authorList>
            <person name="Brosson D."/>
            <person name="Kuhn L."/>
            <person name="Delbac F."/>
            <person name="Garin J."/>
            <person name="Vivares C.P."/>
            <person name="Texier C."/>
        </authorList>
    </citation>
    <scope>IDENTIFICATION BY MASS SPECTROMETRY [LARGE SCALE ANALYSIS]</scope>
    <scope>DEVELOPMENTAL STAGE</scope>
</reference>
<keyword id="KW-0067">ATP-binding</keyword>
<keyword id="KW-0143">Chaperone</keyword>
<keyword id="KW-0963">Cytoplasm</keyword>
<keyword id="KW-0547">Nucleotide-binding</keyword>
<keyword id="KW-1185">Reference proteome</keyword>
<sequence>MNKEISTADILSGGESYSGISAVEKNAKAMMKVYNAIKTSFGPLGLDKMCVDSAGEVSITNDGATILQNMLIDDPAAKILVDLATQQDHEVGDGTTSVVLIAVSLIEKGAKLIASGVHPSVVVSGYKMAFNECVQFIKKSMSKSTLNLGSKALRNVVETSISSKVISSESEVFCGIVIDALKCIESVDENRKNMYPIEDINILKHPGGSMKESFLHQGYALNCSLASNFMKRQVKKPKILCIDFGLQKYKNPLTVSIVVDDPNKLEDIRKKELEITRRQIKTIIDSGANVVLTTRGIDDMCTKLLVEADVVGIRRCKKEDLLVIAKATGTSLVSSIADISGADSISSLGFADKFEVVQIGEEECVLINGLKKKMASIILRGANCQLLDEMQRSVHDAVCVLKRTLESNSVVPGGGAVECALSLMLEKFAFTVNSKEHVAIHRYAESLLSIPKILSTNAGLDSNELVANLLSSQSREMANSSGSKFLGIDVTSGKIQDNFEFGIIEPSVNKMKSLKAATEAAISILRINEVIILPPDQSKN</sequence>
<gene>
    <name type="primary">TCP1</name>
    <name type="synonym">CCT1</name>
    <name type="ordered locus">ECU03_0220</name>
</gene>
<comment type="function">
    <text evidence="1">Molecular chaperone; assists the folding of proteins upon ATP hydrolysis.</text>
</comment>
<comment type="subunit">
    <text evidence="1">Component of the T-complex protein 1 (TCP1) complex.</text>
</comment>
<comment type="subcellular location">
    <subcellularLocation>
        <location evidence="1">Cytoplasm</location>
    </subcellularLocation>
</comment>
<comment type="developmental stage">
    <text evidence="2">Expressed in late sporogonial stages.</text>
</comment>
<comment type="similarity">
    <text evidence="3">Belongs to the TCP-1 chaperonin family.</text>
</comment>